<accession>O09127</accession>
<accession>A3KG07</accession>
<name>EPHA8_MOUSE</name>
<gene>
    <name type="primary">Epha8</name>
    <name type="synonym">Eek</name>
</gene>
<comment type="function">
    <text evidence="8 9 10 11 12 16">Receptor tyrosine kinase which binds promiscuously GPI-anchored ephrin-A family ligands residing on adjacent cells, leading to contact-dependent bidirectional signaling into neighboring cells. The signaling pathway downstream of the receptor is referred to as forward signaling while the signaling pathway downstream of the ephrin ligand is referred to as reverse signaling. The GPI-anchored ephrin-A EFNA2, EFNA3, and EFNA5 are able to activate EPHA8 through phosphorylation. With EFNA5 may regulate integrin-mediated cell adhesion and migration on fibronectin substrate but also neurite outgrowth. During development of the nervous system also plays a role in axon guidance. Downstream effectors of the EPHA8 signaling pathway include FYN which promotes cell adhesion upon activation by EPHA8 and the MAP kinases in the stimulation of neurite outgrowth.</text>
</comment>
<comment type="catalytic activity">
    <reaction evidence="7">
        <text>L-tyrosyl-[protein] + ATP = O-phospho-L-tyrosyl-[protein] + ADP + H(+)</text>
        <dbReference type="Rhea" id="RHEA:10596"/>
        <dbReference type="Rhea" id="RHEA-COMP:10136"/>
        <dbReference type="Rhea" id="RHEA-COMP:20101"/>
        <dbReference type="ChEBI" id="CHEBI:15378"/>
        <dbReference type="ChEBI" id="CHEBI:30616"/>
        <dbReference type="ChEBI" id="CHEBI:46858"/>
        <dbReference type="ChEBI" id="CHEBI:61978"/>
        <dbReference type="ChEBI" id="CHEBI:456216"/>
        <dbReference type="EC" id="2.7.10.1"/>
    </reaction>
</comment>
<comment type="subunit">
    <text evidence="1 8 9 12 13 14 15">Heterotetramer upon binding of the ligand. The heterotetramer is composed of an ephrin dimer and a receptor dimer. Oligomerization is probably required to induce biological responses (By similarity). May also form heterodimers with other ephrin receptors. Interacts with FYN; possible downstream effector of EPHA8 in regulation of cell adhesion. Interacts with PIK3CG; regulates integrin-mediated cell adhesion to substrate. Interacts with TIAM1; regulates clathrin-mediated endocytosis of EPHA8. Interacts with ANKS1A and ANKS1B; EPHA8 kinase activity-independent but stimulated by EPHA8 ubiquitination.</text>
</comment>
<comment type="subcellular location">
    <subcellularLocation>
        <location evidence="15">Cell membrane</location>
        <topology evidence="2">Single-pass type I membrane protein</topology>
    </subcellularLocation>
    <subcellularLocation>
        <location evidence="12">Cell projection</location>
    </subcellularLocation>
    <subcellularLocation>
        <location evidence="14">Early endosome membrane</location>
    </subcellularLocation>
    <text evidence="14">Undergoes clathrin-mediated endocytosis upon EFNA5-binding and is targeted to early endosomes (PubMed:20496116).</text>
</comment>
<comment type="tissue specificity">
    <text>Specifically expressed in the central nervous system.</text>
</comment>
<comment type="developmental stage">
    <text evidence="16">First detected at 10.5 dpc with high levels near the midline region of the tectum and to a lower extent in discrete regions of hindbrain, the dorsal horn, of the spinal cord and in the naso-lacrimal groove. The expression decreases at 12.5 dpc and is barely detectable at 17.5 dpc. Not detected at postnatal stages.</text>
</comment>
<comment type="PTM">
    <text evidence="8 15">Phosphorylated. Phosphorylation is stimulated upon binding of its ligands including EFNA2, EFNA3 and EFNA5. Autophosphorylation on Tyr-615 is critical for association with FYN. Autophosphorylation on Tyr-838 modulates tyrosine kinase activity.</text>
</comment>
<comment type="PTM">
    <text evidence="13">Ubiquitinated. Ubiquitination by CBL regulates the receptor stability and activity through proteasomal degradation. ANKS1A prevents ubiquitination and degradation.</text>
</comment>
<comment type="similarity">
    <text evidence="3">Belongs to the protein kinase superfamily. Tyr protein kinase family. Ephrin receptor subfamily.</text>
</comment>
<reference key="1">
    <citation type="journal article" date="1997" name="Oncogene">
        <title>The Eek receptor, a member of the Eph family of tyrosine protein kinases, can be activated by three different Eph family ligands.</title>
        <authorList>
            <person name="Park S."/>
            <person name="Sanchez M.P."/>
        </authorList>
    </citation>
    <scope>NUCLEOTIDE SEQUENCE [MRNA]</scope>
    <scope>INTERACTION WITH EFNA2; EFNA3 AND EFNA5</scope>
    <scope>PHOSPHORYLATION</scope>
    <scope>TOPOLOGY</scope>
    <scope>SUBCELLULAR LOCATION</scope>
</reference>
<reference key="2">
    <citation type="journal article" date="2009" name="PLoS Biol.">
        <title>Lineage-specific biology revealed by a finished genome assembly of the mouse.</title>
        <authorList>
            <person name="Church D.M."/>
            <person name="Goodstadt L."/>
            <person name="Hillier L.W."/>
            <person name="Zody M.C."/>
            <person name="Goldstein S."/>
            <person name="She X."/>
            <person name="Bult C.J."/>
            <person name="Agarwala R."/>
            <person name="Cherry J.L."/>
            <person name="DiCuccio M."/>
            <person name="Hlavina W."/>
            <person name="Kapustin Y."/>
            <person name="Meric P."/>
            <person name="Maglott D."/>
            <person name="Birtle Z."/>
            <person name="Marques A.C."/>
            <person name="Graves T."/>
            <person name="Zhou S."/>
            <person name="Teague B."/>
            <person name="Potamousis K."/>
            <person name="Churas C."/>
            <person name="Place M."/>
            <person name="Herschleb J."/>
            <person name="Runnheim R."/>
            <person name="Forrest D."/>
            <person name="Amos-Landgraf J."/>
            <person name="Schwartz D.C."/>
            <person name="Cheng Z."/>
            <person name="Lindblad-Toh K."/>
            <person name="Eichler E.E."/>
            <person name="Ponting C.P."/>
        </authorList>
    </citation>
    <scope>NUCLEOTIDE SEQUENCE [LARGE SCALE GENOMIC DNA]</scope>
    <source>
        <strain>C57BL/6J</strain>
    </source>
</reference>
<reference key="3">
    <citation type="journal article" date="1997" name="EMBO J.">
        <title>Aberrant axonal projections in mice lacking EphA8 (Eek) tyrosine protein kinase receptors.</title>
        <authorList>
            <person name="Park S."/>
            <person name="Frisen J."/>
            <person name="Barbacid M."/>
        </authorList>
    </citation>
    <scope>FUNCTION IN AXON GUIDANCE</scope>
    <scope>DEVELOPMENTAL STAGE</scope>
</reference>
<reference key="4">
    <citation type="journal article" date="1999" name="Oncogene">
        <title>Phosphorylation at Tyr-838 in the kinase domain of EphA8 modulates Fyn binding to the Tyr-615 site by enhancing tyrosine kinase activity.</title>
        <authorList>
            <person name="Choi S."/>
            <person name="Park S."/>
        </authorList>
    </citation>
    <scope>FUNCTION IN CELL ADHESION</scope>
    <scope>INTERACTION WITH FYN</scope>
    <scope>PHOSPHORYLATION AT TYR-615 AND TYR-838</scope>
    <scope>MUTAGENESIS OF TYR-615 AND TYR-838</scope>
</reference>
<reference key="5">
    <citation type="journal article" date="2001" name="Mol. Cell. Biol.">
        <title>The EphA8 receptor regulates integrin activity through p110gamma phosphatidylinositol-3 kinase in a tyrosine kinase activity-independent manner.</title>
        <authorList>
            <person name="Gu C."/>
            <person name="Park S."/>
        </authorList>
    </citation>
    <scope>FUNCTION IN INTEGRIN-MEDIATED CELL ADHESION</scope>
    <scope>MUTAGENESIS OF TYR-615; LYS-666 AND TYR-792</scope>
    <scope>INTERACTION WITH PIK3CG</scope>
</reference>
<reference key="6">
    <citation type="journal article" date="2003" name="FEBS Lett.">
        <title>The p110 gamma PI-3 kinase is required for EphA8-stimulated cell migration.</title>
        <authorList>
            <person name="Gu C."/>
            <person name="Park S."/>
        </authorList>
    </citation>
    <scope>FUNCTION IN CELL MIGRATION</scope>
</reference>
<reference key="7">
    <citation type="journal article" date="2005" name="Oncogene">
        <title>The EphA8 receptor induces sustained MAP kinase activation to promote neurite outgrowth in neuronal cells.</title>
        <authorList>
            <person name="Gu C."/>
            <person name="Shim S."/>
            <person name="Shin J."/>
            <person name="Kim J."/>
            <person name="Park J."/>
            <person name="Han K."/>
            <person name="Park S."/>
        </authorList>
    </citation>
    <scope>FUNCTION IN MAP KINASE ACTIVATION AND NEURITE OUTGROWTH</scope>
    <scope>SUBCELLULAR LOCATION</scope>
</reference>
<reference key="8">
    <citation type="journal article" date="2007" name="Mol. Cell. Biol.">
        <title>Identification of phosphotyrosine binding domain-containing proteins as novel downstream targets of the EphA8 signaling function.</title>
        <authorList>
            <person name="Shin J."/>
            <person name="Gu C."/>
            <person name="Park E."/>
            <person name="Park S."/>
        </authorList>
    </citation>
    <scope>FUNCTION IN CELL MIGRATION AND NEURITE RETRACTION</scope>
    <scope>INTERACTION WITH ANKS1A AND ANKS1B</scope>
    <scope>SUBCELLULAR LOCATION</scope>
</reference>
<reference key="9">
    <citation type="journal article" date="2010" name="Mol. Cell. Biol.">
        <title>The SAM domains of Anks family proteins are critically involved in modulating the degradation of EphA receptors.</title>
        <authorList>
            <person name="Kim J."/>
            <person name="Lee H."/>
            <person name="Kim Y."/>
            <person name="Yoo S."/>
            <person name="Park E."/>
            <person name="Park S."/>
        </authorList>
    </citation>
    <scope>UBIQUITINATION BY CBL</scope>
    <scope>INTERACTION WITH ANKS1A</scope>
</reference>
<reference key="10">
    <citation type="journal article" date="2010" name="Mol. Cells">
        <title>EphA8-ephrinA5 signaling and clathrin-mediated endocytosis is regulated by Tiam-1, a Rac-specific guanine nucleotide exchange factor.</title>
        <authorList>
            <person name="Yoo S."/>
            <person name="Shin J."/>
            <person name="Park S."/>
        </authorList>
    </citation>
    <scope>SUBCELLULAR LOCATION</scope>
    <scope>INTERACTION WITH TIAM1</scope>
</reference>
<proteinExistence type="evidence at protein level"/>
<feature type="signal peptide" evidence="2">
    <location>
        <begin position="1"/>
        <end position="26"/>
    </location>
</feature>
<feature type="chain" id="PRO_0000016823" description="Ephrin type-A receptor 8">
    <location>
        <begin position="27"/>
        <end position="1004"/>
    </location>
</feature>
<feature type="topological domain" description="Extracellular" evidence="2">
    <location>
        <begin position="27"/>
        <end position="541"/>
    </location>
</feature>
<feature type="transmembrane region" description="Helical" evidence="2">
    <location>
        <begin position="542"/>
        <end position="562"/>
    </location>
</feature>
<feature type="topological domain" description="Cytoplasmic" evidence="2">
    <location>
        <begin position="563"/>
        <end position="1004"/>
    </location>
</feature>
<feature type="domain" description="Eph LBD" evidence="6">
    <location>
        <begin position="30"/>
        <end position="208"/>
    </location>
</feature>
<feature type="domain" description="Fibronectin type-III 1" evidence="5">
    <location>
        <begin position="327"/>
        <end position="437"/>
    </location>
</feature>
<feature type="domain" description="Fibronectin type-III 2" evidence="5">
    <location>
        <begin position="438"/>
        <end position="533"/>
    </location>
</feature>
<feature type="domain" description="Protein kinase" evidence="3">
    <location>
        <begin position="634"/>
        <end position="895"/>
    </location>
</feature>
<feature type="domain" description="SAM" evidence="4">
    <location>
        <begin position="929"/>
        <end position="993"/>
    </location>
</feature>
<feature type="region of interest" description="Mediates interaction with ANKS1A and ANKS1B" evidence="12">
    <location>
        <begin position="563"/>
        <end position="569"/>
    </location>
</feature>
<feature type="region of interest" description="Mediates interaction with PIK3CG and required for endocytosis" evidence="9">
    <location>
        <begin position="588"/>
        <end position="643"/>
    </location>
</feature>
<feature type="short sequence motif" description="PDZ-binding" evidence="2">
    <location>
        <begin position="1002"/>
        <end position="1004"/>
    </location>
</feature>
<feature type="active site" description="Proton acceptor" evidence="3 7">
    <location>
        <position position="759"/>
    </location>
</feature>
<feature type="binding site" evidence="3">
    <location>
        <begin position="640"/>
        <end position="648"/>
    </location>
    <ligand>
        <name>ATP</name>
        <dbReference type="ChEBI" id="CHEBI:30616"/>
    </ligand>
</feature>
<feature type="binding site" evidence="3">
    <location>
        <position position="666"/>
    </location>
    <ligand>
        <name>ATP</name>
        <dbReference type="ChEBI" id="CHEBI:30616"/>
    </ligand>
</feature>
<feature type="modified residue" description="Phosphotyrosine; by autocatalysis" evidence="8">
    <location>
        <position position="615"/>
    </location>
</feature>
<feature type="modified residue" description="Phosphotyrosine; by autocatalysis" evidence="8">
    <location>
        <position position="838"/>
    </location>
</feature>
<feature type="glycosylation site" description="N-linked (GlcNAc...) asparagine" evidence="2">
    <location>
        <position position="339"/>
    </location>
</feature>
<feature type="glycosylation site" description="N-linked (GlcNAc...) asparagine" evidence="2">
    <location>
        <position position="406"/>
    </location>
</feature>
<feature type="glycosylation site" description="N-linked (GlcNAc...) asparagine" evidence="2">
    <location>
        <position position="431"/>
    </location>
</feature>
<feature type="mutagenesis site" description="Reduced phosphorylation and reduced association with FYN." evidence="8 9">
    <original>Y</original>
    <variation>F</variation>
    <location>
        <position position="615"/>
    </location>
</feature>
<feature type="mutagenesis site" description="Kinase-dead. Loss of autophosphorylation but has no effect on regulation of cell adhesion." evidence="9">
    <original>K</original>
    <variation>M</variation>
    <variation>R</variation>
    <location>
        <position position="666"/>
    </location>
</feature>
<feature type="mutagenesis site" description="Reduced phosphorylation." evidence="9">
    <original>Y</original>
    <variation>F</variation>
    <location>
        <position position="792"/>
    </location>
</feature>
<feature type="mutagenesis site" description="Reduced tyrosine kinase activity." evidence="8">
    <original>Y</original>
    <variation>F</variation>
    <location>
        <position position="838"/>
    </location>
</feature>
<feature type="sequence conflict" description="In Ref. 1; AAB39218." evidence="17" ref="1">
    <original>P</original>
    <variation>R</variation>
    <location>
        <position position="1000"/>
    </location>
</feature>
<feature type="helix" evidence="18">
    <location>
        <begin position="934"/>
        <end position="940"/>
    </location>
</feature>
<feature type="helix" evidence="18">
    <location>
        <begin position="944"/>
        <end position="946"/>
    </location>
</feature>
<feature type="helix" evidence="18">
    <location>
        <begin position="947"/>
        <end position="952"/>
    </location>
</feature>
<feature type="helix" evidence="18">
    <location>
        <begin position="958"/>
        <end position="961"/>
    </location>
</feature>
<feature type="helix" evidence="18">
    <location>
        <begin position="966"/>
        <end position="971"/>
    </location>
</feature>
<feature type="helix" evidence="18">
    <location>
        <begin position="977"/>
        <end position="994"/>
    </location>
</feature>
<keyword id="KW-0002">3D-structure</keyword>
<keyword id="KW-0067">ATP-binding</keyword>
<keyword id="KW-0130">Cell adhesion</keyword>
<keyword id="KW-1003">Cell membrane</keyword>
<keyword id="KW-0966">Cell projection</keyword>
<keyword id="KW-0217">Developmental protein</keyword>
<keyword id="KW-0967">Endosome</keyword>
<keyword id="KW-0325">Glycoprotein</keyword>
<keyword id="KW-0418">Kinase</keyword>
<keyword id="KW-0472">Membrane</keyword>
<keyword id="KW-0524">Neurogenesis</keyword>
<keyword id="KW-0547">Nucleotide-binding</keyword>
<keyword id="KW-0597">Phosphoprotein</keyword>
<keyword id="KW-0675">Receptor</keyword>
<keyword id="KW-1185">Reference proteome</keyword>
<keyword id="KW-0677">Repeat</keyword>
<keyword id="KW-0732">Signal</keyword>
<keyword id="KW-0808">Transferase</keyword>
<keyword id="KW-0812">Transmembrane</keyword>
<keyword id="KW-1133">Transmembrane helix</keyword>
<keyword id="KW-0829">Tyrosine-protein kinase</keyword>
<keyword id="KW-0832">Ubl conjugation</keyword>
<dbReference type="EC" id="2.7.10.1"/>
<dbReference type="EMBL" id="U72207">
    <property type="protein sequence ID" value="AAB39218.1"/>
    <property type="molecule type" value="mRNA"/>
</dbReference>
<dbReference type="EMBL" id="AL627214">
    <property type="status" value="NOT_ANNOTATED_CDS"/>
    <property type="molecule type" value="Genomic_DNA"/>
</dbReference>
<dbReference type="CCDS" id="CCDS18813.1"/>
<dbReference type="RefSeq" id="NP_031965.2">
    <property type="nucleotide sequence ID" value="NM_007939.3"/>
</dbReference>
<dbReference type="PDB" id="8J1I">
    <property type="method" value="X-ray"/>
    <property type="resolution" value="1.60 A"/>
    <property type="chains" value="8=932-996"/>
</dbReference>
<dbReference type="PDBsum" id="8J1I"/>
<dbReference type="BMRB" id="O09127"/>
<dbReference type="SMR" id="O09127"/>
<dbReference type="BioGRID" id="199475">
    <property type="interactions" value="11"/>
</dbReference>
<dbReference type="FunCoup" id="O09127">
    <property type="interactions" value="208"/>
</dbReference>
<dbReference type="IntAct" id="O09127">
    <property type="interactions" value="1"/>
</dbReference>
<dbReference type="MINT" id="O09127"/>
<dbReference type="STRING" id="10090.ENSMUSP00000030420"/>
<dbReference type="BindingDB" id="O09127"/>
<dbReference type="ChEMBL" id="CHEMBL4739670"/>
<dbReference type="GuidetoPHARMACOLOGY" id="1828"/>
<dbReference type="GlyCosmos" id="O09127">
    <property type="glycosylation" value="3 sites, No reported glycans"/>
</dbReference>
<dbReference type="GlyGen" id="O09127">
    <property type="glycosylation" value="4 sites, 1 N-linked glycan (1 site)"/>
</dbReference>
<dbReference type="iPTMnet" id="O09127"/>
<dbReference type="PhosphoSitePlus" id="O09127"/>
<dbReference type="PaxDb" id="10090-ENSMUSP00000030420"/>
<dbReference type="PeptideAtlas" id="O09127"/>
<dbReference type="ProteomicsDB" id="277885"/>
<dbReference type="Antibodypedia" id="4046">
    <property type="antibodies" value="170 antibodies from 33 providers"/>
</dbReference>
<dbReference type="DNASU" id="13842"/>
<dbReference type="Ensembl" id="ENSMUST00000030420.9">
    <property type="protein sequence ID" value="ENSMUSP00000030420.9"/>
    <property type="gene ID" value="ENSMUSG00000028661.9"/>
</dbReference>
<dbReference type="GeneID" id="13842"/>
<dbReference type="KEGG" id="mmu:13842"/>
<dbReference type="UCSC" id="uc008vis.1">
    <property type="organism name" value="mouse"/>
</dbReference>
<dbReference type="AGR" id="MGI:109378"/>
<dbReference type="CTD" id="2046"/>
<dbReference type="MGI" id="MGI:109378">
    <property type="gene designation" value="Epha8"/>
</dbReference>
<dbReference type="VEuPathDB" id="HostDB:ENSMUSG00000028661"/>
<dbReference type="eggNOG" id="KOG0196">
    <property type="taxonomic scope" value="Eukaryota"/>
</dbReference>
<dbReference type="GeneTree" id="ENSGT00940000160469"/>
<dbReference type="HOGENOM" id="CLU_000288_141_4_1"/>
<dbReference type="InParanoid" id="O09127"/>
<dbReference type="OMA" id="MRMNIDD"/>
<dbReference type="OrthoDB" id="4062651at2759"/>
<dbReference type="PhylomeDB" id="O09127"/>
<dbReference type="TreeFam" id="TF315608"/>
<dbReference type="BRENDA" id="2.7.10.1">
    <property type="organism ID" value="3474"/>
</dbReference>
<dbReference type="Reactome" id="R-MMU-2682334">
    <property type="pathway name" value="EPH-Ephrin signaling"/>
</dbReference>
<dbReference type="Reactome" id="R-MMU-3928663">
    <property type="pathway name" value="EPHA-mediated growth cone collapse"/>
</dbReference>
<dbReference type="Reactome" id="R-MMU-3928665">
    <property type="pathway name" value="EPH-ephrin mediated repulsion of cells"/>
</dbReference>
<dbReference type="BioGRID-ORCS" id="13842">
    <property type="hits" value="4 hits in 80 CRISPR screens"/>
</dbReference>
<dbReference type="ChiTaRS" id="Epha8">
    <property type="organism name" value="mouse"/>
</dbReference>
<dbReference type="PRO" id="PR:O09127"/>
<dbReference type="Proteomes" id="UP000000589">
    <property type="component" value="Chromosome 4"/>
</dbReference>
<dbReference type="RNAct" id="O09127">
    <property type="molecule type" value="protein"/>
</dbReference>
<dbReference type="Bgee" id="ENSMUSG00000028661">
    <property type="expression patterns" value="Expressed in future diencephalon and 70 other cell types or tissues"/>
</dbReference>
<dbReference type="GO" id="GO:0031901">
    <property type="term" value="C:early endosome membrane"/>
    <property type="evidence" value="ECO:0007669"/>
    <property type="project" value="UniProtKB-SubCell"/>
</dbReference>
<dbReference type="GO" id="GO:0043005">
    <property type="term" value="C:neuron projection"/>
    <property type="evidence" value="ECO:0000314"/>
    <property type="project" value="UniProtKB"/>
</dbReference>
<dbReference type="GO" id="GO:0005886">
    <property type="term" value="C:plasma membrane"/>
    <property type="evidence" value="ECO:0000314"/>
    <property type="project" value="UniProtKB"/>
</dbReference>
<dbReference type="GO" id="GO:0005524">
    <property type="term" value="F:ATP binding"/>
    <property type="evidence" value="ECO:0007669"/>
    <property type="project" value="UniProtKB-KW"/>
</dbReference>
<dbReference type="GO" id="GO:0005003">
    <property type="term" value="F:ephrin receptor activity"/>
    <property type="evidence" value="ECO:0000314"/>
    <property type="project" value="UniProtKB"/>
</dbReference>
<dbReference type="GO" id="GO:0005004">
    <property type="term" value="F:GPI-linked ephrin receptor activity"/>
    <property type="evidence" value="ECO:0000314"/>
    <property type="project" value="UniProtKB"/>
</dbReference>
<dbReference type="GO" id="GO:0019838">
    <property type="term" value="F:growth factor binding"/>
    <property type="evidence" value="ECO:0000353"/>
    <property type="project" value="ARUK-UCL"/>
</dbReference>
<dbReference type="GO" id="GO:0007411">
    <property type="term" value="P:axon guidance"/>
    <property type="evidence" value="ECO:0000315"/>
    <property type="project" value="UniProtKB"/>
</dbReference>
<dbReference type="GO" id="GO:0007155">
    <property type="term" value="P:cell adhesion"/>
    <property type="evidence" value="ECO:0007669"/>
    <property type="project" value="UniProtKB-KW"/>
</dbReference>
<dbReference type="GO" id="GO:0071372">
    <property type="term" value="P:cellular response to follicle-stimulating hormone stimulus"/>
    <property type="evidence" value="ECO:0000314"/>
    <property type="project" value="MGI"/>
</dbReference>
<dbReference type="GO" id="GO:0048013">
    <property type="term" value="P:ephrin receptor signaling pathway"/>
    <property type="evidence" value="ECO:0000314"/>
    <property type="project" value="UniProtKB"/>
</dbReference>
<dbReference type="GO" id="GO:0031175">
    <property type="term" value="P:neuron projection development"/>
    <property type="evidence" value="ECO:0000314"/>
    <property type="project" value="UniProtKB"/>
</dbReference>
<dbReference type="GO" id="GO:0016322">
    <property type="term" value="P:neuron remodeling"/>
    <property type="evidence" value="ECO:0000314"/>
    <property type="project" value="UniProtKB"/>
</dbReference>
<dbReference type="GO" id="GO:0043410">
    <property type="term" value="P:positive regulation of MAPK cascade"/>
    <property type="evidence" value="ECO:0000314"/>
    <property type="project" value="UniProtKB"/>
</dbReference>
<dbReference type="GO" id="GO:0051897">
    <property type="term" value="P:positive regulation of phosphatidylinositol 3-kinase/protein kinase B signal transduction"/>
    <property type="evidence" value="ECO:0000314"/>
    <property type="project" value="UniProtKB"/>
</dbReference>
<dbReference type="GO" id="GO:0046777">
    <property type="term" value="P:protein autophosphorylation"/>
    <property type="evidence" value="ECO:0000314"/>
    <property type="project" value="UniProtKB"/>
</dbReference>
<dbReference type="GO" id="GO:0030155">
    <property type="term" value="P:regulation of cell adhesion"/>
    <property type="evidence" value="ECO:0000314"/>
    <property type="project" value="UniProtKB"/>
</dbReference>
<dbReference type="GO" id="GO:0033628">
    <property type="term" value="P:regulation of cell adhesion mediated by integrin"/>
    <property type="evidence" value="ECO:0000314"/>
    <property type="project" value="UniProtKB"/>
</dbReference>
<dbReference type="GO" id="GO:0006929">
    <property type="term" value="P:substrate-dependent cell migration"/>
    <property type="evidence" value="ECO:0000314"/>
    <property type="project" value="UniProtKB"/>
</dbReference>
<dbReference type="CDD" id="cd10486">
    <property type="entry name" value="EphR_LBD_A8"/>
    <property type="match status" value="1"/>
</dbReference>
<dbReference type="CDD" id="cd00063">
    <property type="entry name" value="FN3"/>
    <property type="match status" value="1"/>
</dbReference>
<dbReference type="CDD" id="cd09550">
    <property type="entry name" value="SAM_EPH-A8"/>
    <property type="match status" value="1"/>
</dbReference>
<dbReference type="FunFam" id="2.10.50.10:FF:000001">
    <property type="entry name" value="Ephrin type-A receptor 5"/>
    <property type="match status" value="1"/>
</dbReference>
<dbReference type="FunFam" id="2.60.40.10:FF:000045">
    <property type="entry name" value="Ephrin type-A receptor 5"/>
    <property type="match status" value="1"/>
</dbReference>
<dbReference type="FunFam" id="2.60.40.1770:FF:000001">
    <property type="entry name" value="Ephrin type-A receptor 5"/>
    <property type="match status" value="1"/>
</dbReference>
<dbReference type="FunFam" id="1.10.510.10:FF:000130">
    <property type="entry name" value="Ephrin type-A receptor 7"/>
    <property type="match status" value="1"/>
</dbReference>
<dbReference type="FunFam" id="2.60.120.260:FF:000001">
    <property type="entry name" value="Ephrin type-A receptor 7"/>
    <property type="match status" value="1"/>
</dbReference>
<dbReference type="FunFam" id="2.60.40.10:FF:000190">
    <property type="entry name" value="Ephrin type-A receptor 7"/>
    <property type="match status" value="1"/>
</dbReference>
<dbReference type="FunFam" id="1.10.150.50:FF:000058">
    <property type="entry name" value="ephrin type-A receptor 8"/>
    <property type="match status" value="1"/>
</dbReference>
<dbReference type="FunFam" id="3.30.200.20:FF:000143">
    <property type="entry name" value="Ephrin type-B receptor 6"/>
    <property type="match status" value="1"/>
</dbReference>
<dbReference type="Gene3D" id="2.60.40.1770">
    <property type="entry name" value="ephrin a2 ectodomain"/>
    <property type="match status" value="1"/>
</dbReference>
<dbReference type="Gene3D" id="2.60.120.260">
    <property type="entry name" value="Galactose-binding domain-like"/>
    <property type="match status" value="1"/>
</dbReference>
<dbReference type="Gene3D" id="2.60.40.10">
    <property type="entry name" value="Immunoglobulins"/>
    <property type="match status" value="2"/>
</dbReference>
<dbReference type="Gene3D" id="3.30.200.20">
    <property type="entry name" value="Phosphorylase Kinase, domain 1"/>
    <property type="match status" value="1"/>
</dbReference>
<dbReference type="Gene3D" id="1.10.150.50">
    <property type="entry name" value="Transcription Factor, Ets-1"/>
    <property type="match status" value="1"/>
</dbReference>
<dbReference type="Gene3D" id="1.10.510.10">
    <property type="entry name" value="Transferase(Phosphotransferase) domain 1"/>
    <property type="match status" value="1"/>
</dbReference>
<dbReference type="Gene3D" id="2.10.50.10">
    <property type="entry name" value="Tumor Necrosis Factor Receptor, subunit A, domain 2"/>
    <property type="match status" value="1"/>
</dbReference>
<dbReference type="InterPro" id="IPR027936">
    <property type="entry name" value="Eph_TM"/>
</dbReference>
<dbReference type="InterPro" id="IPR034287">
    <property type="entry name" value="EphA8_rcpt_lig-bd"/>
</dbReference>
<dbReference type="InterPro" id="IPR001090">
    <property type="entry name" value="Ephrin_rcpt_lig-bd_dom"/>
</dbReference>
<dbReference type="InterPro" id="IPR050449">
    <property type="entry name" value="Ephrin_rcpt_TKs"/>
</dbReference>
<dbReference type="InterPro" id="IPR003961">
    <property type="entry name" value="FN3_dom"/>
</dbReference>
<dbReference type="InterPro" id="IPR036116">
    <property type="entry name" value="FN3_sf"/>
</dbReference>
<dbReference type="InterPro" id="IPR008979">
    <property type="entry name" value="Galactose-bd-like_sf"/>
</dbReference>
<dbReference type="InterPro" id="IPR013783">
    <property type="entry name" value="Ig-like_fold"/>
</dbReference>
<dbReference type="InterPro" id="IPR011009">
    <property type="entry name" value="Kinase-like_dom_sf"/>
</dbReference>
<dbReference type="InterPro" id="IPR000719">
    <property type="entry name" value="Prot_kinase_dom"/>
</dbReference>
<dbReference type="InterPro" id="IPR017441">
    <property type="entry name" value="Protein_kinase_ATP_BS"/>
</dbReference>
<dbReference type="InterPro" id="IPR001660">
    <property type="entry name" value="SAM"/>
</dbReference>
<dbReference type="InterPro" id="IPR013761">
    <property type="entry name" value="SAM/pointed_sf"/>
</dbReference>
<dbReference type="InterPro" id="IPR001245">
    <property type="entry name" value="Ser-Thr/Tyr_kinase_cat_dom"/>
</dbReference>
<dbReference type="InterPro" id="IPR008266">
    <property type="entry name" value="Tyr_kinase_AS"/>
</dbReference>
<dbReference type="InterPro" id="IPR020635">
    <property type="entry name" value="Tyr_kinase_cat_dom"/>
</dbReference>
<dbReference type="InterPro" id="IPR016257">
    <property type="entry name" value="Tyr_kinase_ephrin_rcpt"/>
</dbReference>
<dbReference type="InterPro" id="IPR001426">
    <property type="entry name" value="Tyr_kinase_rcpt_V_CS"/>
</dbReference>
<dbReference type="PANTHER" id="PTHR46877">
    <property type="entry name" value="EPH RECEPTOR A5"/>
    <property type="match status" value="1"/>
</dbReference>
<dbReference type="PANTHER" id="PTHR46877:SF7">
    <property type="entry name" value="EPHRIN TYPE-A RECEPTOR 8"/>
    <property type="match status" value="1"/>
</dbReference>
<dbReference type="Pfam" id="PF14575">
    <property type="entry name" value="EphA2_TM"/>
    <property type="match status" value="1"/>
</dbReference>
<dbReference type="Pfam" id="PF01404">
    <property type="entry name" value="Ephrin_lbd"/>
    <property type="match status" value="1"/>
</dbReference>
<dbReference type="Pfam" id="PF00041">
    <property type="entry name" value="fn3"/>
    <property type="match status" value="2"/>
</dbReference>
<dbReference type="Pfam" id="PF07714">
    <property type="entry name" value="PK_Tyr_Ser-Thr"/>
    <property type="match status" value="1"/>
</dbReference>
<dbReference type="Pfam" id="PF00536">
    <property type="entry name" value="SAM_1"/>
    <property type="match status" value="1"/>
</dbReference>
<dbReference type="PIRSF" id="PIRSF000666">
    <property type="entry name" value="TyrPK_ephrin_receptor"/>
    <property type="match status" value="1"/>
</dbReference>
<dbReference type="PRINTS" id="PR00014">
    <property type="entry name" value="FNTYPEIII"/>
</dbReference>
<dbReference type="PRINTS" id="PR00109">
    <property type="entry name" value="TYRKINASE"/>
</dbReference>
<dbReference type="SMART" id="SM00615">
    <property type="entry name" value="EPH_lbd"/>
    <property type="match status" value="1"/>
</dbReference>
<dbReference type="SMART" id="SM01411">
    <property type="entry name" value="Ephrin_rec_like"/>
    <property type="match status" value="1"/>
</dbReference>
<dbReference type="SMART" id="SM00060">
    <property type="entry name" value="FN3"/>
    <property type="match status" value="2"/>
</dbReference>
<dbReference type="SMART" id="SM00454">
    <property type="entry name" value="SAM"/>
    <property type="match status" value="1"/>
</dbReference>
<dbReference type="SMART" id="SM00219">
    <property type="entry name" value="TyrKc"/>
    <property type="match status" value="1"/>
</dbReference>
<dbReference type="SUPFAM" id="SSF49265">
    <property type="entry name" value="Fibronectin type III"/>
    <property type="match status" value="1"/>
</dbReference>
<dbReference type="SUPFAM" id="SSF49785">
    <property type="entry name" value="Galactose-binding domain-like"/>
    <property type="match status" value="1"/>
</dbReference>
<dbReference type="SUPFAM" id="SSF56112">
    <property type="entry name" value="Protein kinase-like (PK-like)"/>
    <property type="match status" value="1"/>
</dbReference>
<dbReference type="SUPFAM" id="SSF47769">
    <property type="entry name" value="SAM/Pointed domain"/>
    <property type="match status" value="1"/>
</dbReference>
<dbReference type="PROSITE" id="PS01186">
    <property type="entry name" value="EGF_2"/>
    <property type="match status" value="1"/>
</dbReference>
<dbReference type="PROSITE" id="PS51550">
    <property type="entry name" value="EPH_LBD"/>
    <property type="match status" value="1"/>
</dbReference>
<dbReference type="PROSITE" id="PS50853">
    <property type="entry name" value="FN3"/>
    <property type="match status" value="2"/>
</dbReference>
<dbReference type="PROSITE" id="PS00107">
    <property type="entry name" value="PROTEIN_KINASE_ATP"/>
    <property type="match status" value="1"/>
</dbReference>
<dbReference type="PROSITE" id="PS50011">
    <property type="entry name" value="PROTEIN_KINASE_DOM"/>
    <property type="match status" value="1"/>
</dbReference>
<dbReference type="PROSITE" id="PS00109">
    <property type="entry name" value="PROTEIN_KINASE_TYR"/>
    <property type="match status" value="1"/>
</dbReference>
<dbReference type="PROSITE" id="PS00790">
    <property type="entry name" value="RECEPTOR_TYR_KIN_V_1"/>
    <property type="match status" value="1"/>
</dbReference>
<dbReference type="PROSITE" id="PS00791">
    <property type="entry name" value="RECEPTOR_TYR_KIN_V_2"/>
    <property type="match status" value="1"/>
</dbReference>
<dbReference type="PROSITE" id="PS50105">
    <property type="entry name" value="SAM_DOMAIN"/>
    <property type="match status" value="1"/>
</dbReference>
<evidence type="ECO:0000250" key="1"/>
<evidence type="ECO:0000255" key="2"/>
<evidence type="ECO:0000255" key="3">
    <source>
        <dbReference type="PROSITE-ProRule" id="PRU00159"/>
    </source>
</evidence>
<evidence type="ECO:0000255" key="4">
    <source>
        <dbReference type="PROSITE-ProRule" id="PRU00184"/>
    </source>
</evidence>
<evidence type="ECO:0000255" key="5">
    <source>
        <dbReference type="PROSITE-ProRule" id="PRU00316"/>
    </source>
</evidence>
<evidence type="ECO:0000255" key="6">
    <source>
        <dbReference type="PROSITE-ProRule" id="PRU00883"/>
    </source>
</evidence>
<evidence type="ECO:0000255" key="7">
    <source>
        <dbReference type="PROSITE-ProRule" id="PRU10028"/>
    </source>
</evidence>
<evidence type="ECO:0000269" key="8">
    <source>
    </source>
</evidence>
<evidence type="ECO:0000269" key="9">
    <source>
    </source>
</evidence>
<evidence type="ECO:0000269" key="10">
    <source>
    </source>
</evidence>
<evidence type="ECO:0000269" key="11">
    <source>
    </source>
</evidence>
<evidence type="ECO:0000269" key="12">
    <source>
    </source>
</evidence>
<evidence type="ECO:0000269" key="13">
    <source>
    </source>
</evidence>
<evidence type="ECO:0000269" key="14">
    <source>
    </source>
</evidence>
<evidence type="ECO:0000269" key="15">
    <source>
    </source>
</evidence>
<evidence type="ECO:0000269" key="16">
    <source>
    </source>
</evidence>
<evidence type="ECO:0000305" key="17"/>
<evidence type="ECO:0007829" key="18">
    <source>
        <dbReference type="PDB" id="8J1I"/>
    </source>
</evidence>
<sequence length="1004" mass="110705">MAPARARLSPALWVVTAAAAATCVSAGRGEVNLLDTSTIHGDWGWLTYPAHGWDSINEVDESFRPIHTYQVCNVMSPNQNNWLRTNWVPRDGARRVYAEIKFTLRDCNSIPGVLGTCKETFNLHYLESDRDLGASTQESQFLKIDTIAADESFTGADLGVRRLKLNTEVRGVGPLSKRGFYLAFQDIGACLAILSLRIYYKKCPAMVRNLAAFSEAVTGADSSSLVEVRGQCVRHSEERDTPKMYCSAEGEWLVPIGKCVCSAGYEERRDACMACELGFYKSAPGDQLCARCPPHSHSATPAAQTCRCDLSYYRAALDPPSAACTRPPSAPVNLISSVNGTSVTLEWAPPLDPGGRSDITYNAVCRRCPWALSHCEACGSGTRFVPQQTSLAQASLLVANLLAHMNYSFWIEAVNGVSNLSPEPRSAAVVNITTNQAAPSQVVVIRQERAGQTSVSLLWQEPEQPNGIILEYEIKYYEKDKEMQSYSTLKAVTTRATVSGLKPGTRYVFQVRARTSAGCGRFSQAMEVETGKPRPRYDTRTIVWICLTLITGLVVLLLLLICKKRHCGYSKAFQDSDEEKMHYQNGQAPPPVFLPLNHPPGKFPETQFSAEPHTYEEPGRAGRSFTREIEASRIHIEKIIGSGESGEVCYGRLQVPGQRDVPVAIKALKAGYTERQRQDFLSEAAIMGQFDHPNIIRLEGVVTRGRLAMIVTEYMENGSLDAFLRTHDGQFTIVQLVGMLRGVGAGMRYLSDLGYIHRDLAARNVLVDGRLVCKVSDFGLSRALEDDPEAAYTTAGGKIPIRWTAPEAIAFRTFSSASDVWSFGVVMWEVLAYGERPYWNMTNQDVISSVEEGYRLPAPMGCPRALHQLMLDCWHKDRAQRPRFAHVVSVLDALVHSPESLRATATVSRCPPPAFARSCFDLRAGGSGNGDLTVGDWLDSIRMGRYRDHFAAGGYSSLGMVLRMNAQDVRALGITLMGHQKKILGSIQTMRAQLSSTQGPRRHL</sequence>
<protein>
    <recommendedName>
        <fullName>Ephrin type-A receptor 8</fullName>
        <ecNumber>2.7.10.1</ecNumber>
    </recommendedName>
    <alternativeName>
        <fullName>EPH- and ELK-related kinase</fullName>
    </alternativeName>
    <alternativeName>
        <fullName>Tyrosine-protein kinase receptor EEK</fullName>
    </alternativeName>
</protein>
<organism>
    <name type="scientific">Mus musculus</name>
    <name type="common">Mouse</name>
    <dbReference type="NCBI Taxonomy" id="10090"/>
    <lineage>
        <taxon>Eukaryota</taxon>
        <taxon>Metazoa</taxon>
        <taxon>Chordata</taxon>
        <taxon>Craniata</taxon>
        <taxon>Vertebrata</taxon>
        <taxon>Euteleostomi</taxon>
        <taxon>Mammalia</taxon>
        <taxon>Eutheria</taxon>
        <taxon>Euarchontoglires</taxon>
        <taxon>Glires</taxon>
        <taxon>Rodentia</taxon>
        <taxon>Myomorpha</taxon>
        <taxon>Muroidea</taxon>
        <taxon>Muridae</taxon>
        <taxon>Murinae</taxon>
        <taxon>Mus</taxon>
        <taxon>Mus</taxon>
    </lineage>
</organism>